<proteinExistence type="inferred from homology"/>
<protein>
    <recommendedName>
        <fullName>Protein MGF 505-6R</fullName>
    </recommendedName>
</protein>
<keyword id="KW-0040">ANK repeat</keyword>
<keyword id="KW-0677">Repeat</keyword>
<reference key="1">
    <citation type="submission" date="2003-03" db="EMBL/GenBank/DDBJ databases">
        <title>African swine fever virus genomes.</title>
        <authorList>
            <person name="Kutish G.F."/>
            <person name="Rock D.L."/>
        </authorList>
    </citation>
    <scope>NUCLEOTIDE SEQUENCE [LARGE SCALE GENOMIC DNA]</scope>
</reference>
<feature type="chain" id="PRO_0000373337" description="Protein MGF 505-6R">
    <location>
        <begin position="1"/>
        <end position="518"/>
    </location>
</feature>
<feature type="repeat" description="ANK 1">
    <location>
        <begin position="54"/>
        <end position="83"/>
    </location>
</feature>
<feature type="repeat" description="ANK 2">
    <location>
        <begin position="129"/>
        <end position="158"/>
    </location>
</feature>
<feature type="repeat" description="ANK 3">
    <location>
        <begin position="261"/>
        <end position="290"/>
    </location>
</feature>
<feature type="repeat" description="ANK 4">
    <location>
        <begin position="292"/>
        <end position="322"/>
    </location>
</feature>
<feature type="repeat" description="ANK 5">
    <location>
        <begin position="324"/>
        <end position="351"/>
    </location>
</feature>
<organismHost>
    <name type="scientific">Ornithodoros</name>
    <name type="common">relapsing fever ticks</name>
    <dbReference type="NCBI Taxonomy" id="6937"/>
</organismHost>
<organismHost>
    <name type="scientific">Phacochoerus aethiopicus</name>
    <name type="common">Warthog</name>
    <dbReference type="NCBI Taxonomy" id="85517"/>
</organismHost>
<organismHost>
    <name type="scientific">Phacochoerus africanus</name>
    <name type="common">Warthog</name>
    <dbReference type="NCBI Taxonomy" id="41426"/>
</organismHost>
<organismHost>
    <name type="scientific">Potamochoerus larvatus</name>
    <name type="common">Bushpig</name>
    <dbReference type="NCBI Taxonomy" id="273792"/>
</organismHost>
<organismHost>
    <name type="scientific">Sus scrofa</name>
    <name type="common">Pig</name>
    <dbReference type="NCBI Taxonomy" id="9823"/>
</organismHost>
<sequence>MFSLQDLCRKNIFFLPNDFSKHTLQWLGLYWKEHGSVHRAEKDSIMIQNELVLSINDALLLAGEEGDTDVVQLLLLWEGNLHYAIIGALKTEKYSLVCEYHSQIQDWHVLLPLIQDPETFEKCHDLSLECDFICLLQHAVKCDMLSILVKYKEDLLNVRIRHRIQSLFVLACENRRFEIIEWIGQNLPIPEPEAIFSIAIVTKDIELFSLGYKLIFDYMQRQGTFQLTNMVRMLLLNRYIGMAIEKGLLPFIVETLKYGGSVNRALSYAVIDNKRKIIDYLVRHENIPRGTIERLLHLAVKKQSSRKTLNLLLSYINYKVKNVKKLVEHVVDHNSTLVLKILLEKKENLVDAVLTRLVKHSTYFRVREFIQEFSISPEKFIKIAVREQKNVLIEAISEDIWENPTERITYLKQIVHTIKYESGRRFLIDIIHSIYQSYSLKHEDILKLAIFYVKYNAITHFKDLCKYLWLNRGTESKKLFLECLEIADEKEFPDIKSIVSEYINYLFTAGAITKEEII</sequence>
<gene>
    <name type="ordered locus">Pret-042</name>
</gene>
<comment type="function">
    <text evidence="1">Plays a role in virus cell tropism, and may be required for efficient virus replication in macrophages.</text>
</comment>
<comment type="similarity">
    <text evidence="2">Belongs to the asfivirus MGF 505 family.</text>
</comment>
<name>5056R_ASFP4</name>
<accession>P0C9U0</accession>
<evidence type="ECO:0000250" key="1"/>
<evidence type="ECO:0000305" key="2"/>
<organism>
    <name type="scientific">African swine fever virus (isolate Tick/South Africa/Pretoriuskop Pr4/1996)</name>
    <name type="common">ASFV</name>
    <dbReference type="NCBI Taxonomy" id="561443"/>
    <lineage>
        <taxon>Viruses</taxon>
        <taxon>Varidnaviria</taxon>
        <taxon>Bamfordvirae</taxon>
        <taxon>Nucleocytoviricota</taxon>
        <taxon>Pokkesviricetes</taxon>
        <taxon>Asfuvirales</taxon>
        <taxon>Asfarviridae</taxon>
        <taxon>Asfivirus</taxon>
        <taxon>African swine fever virus</taxon>
    </lineage>
</organism>
<dbReference type="EMBL" id="AY261363">
    <property type="status" value="NOT_ANNOTATED_CDS"/>
    <property type="molecule type" value="Genomic_DNA"/>
</dbReference>
<dbReference type="SMR" id="P0C9U0"/>
<dbReference type="Proteomes" id="UP000000859">
    <property type="component" value="Segment"/>
</dbReference>
<dbReference type="InterPro" id="IPR004858">
    <property type="entry name" value="MGF_505"/>
</dbReference>
<dbReference type="Pfam" id="PF03158">
    <property type="entry name" value="DUF249"/>
    <property type="match status" value="1"/>
</dbReference>